<protein>
    <recommendedName>
        <fullName evidence="1">UDP-3-O-acyl-N-acetylglucosamine deacetylase</fullName>
        <shortName evidence="1">UDP-3-O-acyl-GlcNAc deacetylase</shortName>
        <ecNumber evidence="1">3.5.1.108</ecNumber>
    </recommendedName>
    <alternativeName>
        <fullName evidence="1">UDP-3-O-[R-3-hydroxymyristoyl]-N-acetylglucosamine deacetylase</fullName>
    </alternativeName>
</protein>
<comment type="function">
    <text evidence="1">Catalyzes the hydrolysis of UDP-3-O-myristoyl-N-acetylglucosamine to form UDP-3-O-myristoylglucosamine and acetate, the committed step in lipid A biosynthesis.</text>
</comment>
<comment type="catalytic activity">
    <reaction evidence="1">
        <text>a UDP-3-O-[(3R)-3-hydroxyacyl]-N-acetyl-alpha-D-glucosamine + H2O = a UDP-3-O-[(3R)-3-hydroxyacyl]-alpha-D-glucosamine + acetate</text>
        <dbReference type="Rhea" id="RHEA:67816"/>
        <dbReference type="ChEBI" id="CHEBI:15377"/>
        <dbReference type="ChEBI" id="CHEBI:30089"/>
        <dbReference type="ChEBI" id="CHEBI:137740"/>
        <dbReference type="ChEBI" id="CHEBI:173225"/>
        <dbReference type="EC" id="3.5.1.108"/>
    </reaction>
</comment>
<comment type="cofactor">
    <cofactor evidence="1">
        <name>Zn(2+)</name>
        <dbReference type="ChEBI" id="CHEBI:29105"/>
    </cofactor>
</comment>
<comment type="pathway">
    <text evidence="1">Glycolipid biosynthesis; lipid IV(A) biosynthesis; lipid IV(A) from (3R)-3-hydroxytetradecanoyl-[acyl-carrier-protein] and UDP-N-acetyl-alpha-D-glucosamine: step 2/6.</text>
</comment>
<comment type="similarity">
    <text evidence="1">Belongs to the LpxC family.</text>
</comment>
<name>LPXC_NEIM0</name>
<feature type="chain" id="PRO_1000080222" description="UDP-3-O-acyl-N-acetylglucosamine deacetylase">
    <location>
        <begin position="1"/>
        <end position="307"/>
    </location>
</feature>
<feature type="active site" description="Proton donor" evidence="1">
    <location>
        <position position="266"/>
    </location>
</feature>
<feature type="binding site" evidence="1">
    <location>
        <position position="80"/>
    </location>
    <ligand>
        <name>Zn(2+)</name>
        <dbReference type="ChEBI" id="CHEBI:29105"/>
    </ligand>
</feature>
<feature type="binding site" evidence="1">
    <location>
        <position position="239"/>
    </location>
    <ligand>
        <name>Zn(2+)</name>
        <dbReference type="ChEBI" id="CHEBI:29105"/>
    </ligand>
</feature>
<feature type="binding site" evidence="1">
    <location>
        <position position="243"/>
    </location>
    <ligand>
        <name>Zn(2+)</name>
        <dbReference type="ChEBI" id="CHEBI:29105"/>
    </ligand>
</feature>
<dbReference type="EC" id="3.5.1.108" evidence="1"/>
<dbReference type="EMBL" id="CP000381">
    <property type="protein sequence ID" value="ABX72250.1"/>
    <property type="molecule type" value="Genomic_DNA"/>
</dbReference>
<dbReference type="RefSeq" id="WP_002216134.1">
    <property type="nucleotide sequence ID" value="NC_010120.1"/>
</dbReference>
<dbReference type="SMR" id="A9LZR8"/>
<dbReference type="KEGG" id="nmn:NMCC_0020"/>
<dbReference type="HOGENOM" id="CLU_046528_1_0_4"/>
<dbReference type="UniPathway" id="UPA00359">
    <property type="reaction ID" value="UER00478"/>
</dbReference>
<dbReference type="Proteomes" id="UP000001177">
    <property type="component" value="Chromosome"/>
</dbReference>
<dbReference type="GO" id="GO:0016020">
    <property type="term" value="C:membrane"/>
    <property type="evidence" value="ECO:0007669"/>
    <property type="project" value="GOC"/>
</dbReference>
<dbReference type="GO" id="GO:0046872">
    <property type="term" value="F:metal ion binding"/>
    <property type="evidence" value="ECO:0007669"/>
    <property type="project" value="UniProtKB-KW"/>
</dbReference>
<dbReference type="GO" id="GO:0103117">
    <property type="term" value="F:UDP-3-O-acyl-N-acetylglucosamine deacetylase activity"/>
    <property type="evidence" value="ECO:0007669"/>
    <property type="project" value="UniProtKB-UniRule"/>
</dbReference>
<dbReference type="GO" id="GO:0009245">
    <property type="term" value="P:lipid A biosynthetic process"/>
    <property type="evidence" value="ECO:0007669"/>
    <property type="project" value="UniProtKB-UniRule"/>
</dbReference>
<dbReference type="Gene3D" id="3.30.230.20">
    <property type="entry name" value="lpxc deacetylase, domain 1"/>
    <property type="match status" value="1"/>
</dbReference>
<dbReference type="Gene3D" id="3.30.1700.10">
    <property type="entry name" value="lpxc deacetylase, domain 2"/>
    <property type="match status" value="1"/>
</dbReference>
<dbReference type="HAMAP" id="MF_00388">
    <property type="entry name" value="LpxC"/>
    <property type="match status" value="1"/>
</dbReference>
<dbReference type="InterPro" id="IPR020568">
    <property type="entry name" value="Ribosomal_Su5_D2-typ_SF"/>
</dbReference>
<dbReference type="InterPro" id="IPR004463">
    <property type="entry name" value="UDP-acyl_GlcNac_deAcase"/>
</dbReference>
<dbReference type="InterPro" id="IPR011334">
    <property type="entry name" value="UDP-acyl_GlcNac_deAcase_C"/>
</dbReference>
<dbReference type="InterPro" id="IPR015870">
    <property type="entry name" value="UDP-acyl_N-AcGlcN_deAcase_N"/>
</dbReference>
<dbReference type="NCBIfam" id="TIGR00325">
    <property type="entry name" value="lpxC"/>
    <property type="match status" value="1"/>
</dbReference>
<dbReference type="PANTHER" id="PTHR33694">
    <property type="entry name" value="UDP-3-O-ACYL-N-ACETYLGLUCOSAMINE DEACETYLASE 1, MITOCHONDRIAL-RELATED"/>
    <property type="match status" value="1"/>
</dbReference>
<dbReference type="PANTHER" id="PTHR33694:SF1">
    <property type="entry name" value="UDP-3-O-ACYL-N-ACETYLGLUCOSAMINE DEACETYLASE 1, MITOCHONDRIAL-RELATED"/>
    <property type="match status" value="1"/>
</dbReference>
<dbReference type="Pfam" id="PF03331">
    <property type="entry name" value="LpxC"/>
    <property type="match status" value="1"/>
</dbReference>
<dbReference type="SUPFAM" id="SSF54211">
    <property type="entry name" value="Ribosomal protein S5 domain 2-like"/>
    <property type="match status" value="2"/>
</dbReference>
<reference key="1">
    <citation type="journal article" date="2008" name="Genomics">
        <title>Characterization of ST-4821 complex, a unique Neisseria meningitidis clone.</title>
        <authorList>
            <person name="Peng J."/>
            <person name="Yang L."/>
            <person name="Yang F."/>
            <person name="Yang J."/>
            <person name="Yan Y."/>
            <person name="Nie H."/>
            <person name="Zhang X."/>
            <person name="Xiong Z."/>
            <person name="Jiang Y."/>
            <person name="Cheng F."/>
            <person name="Xu X."/>
            <person name="Chen S."/>
            <person name="Sun L."/>
            <person name="Li W."/>
            <person name="Shen Y."/>
            <person name="Shao Z."/>
            <person name="Liang X."/>
            <person name="Xu J."/>
            <person name="Jin Q."/>
        </authorList>
    </citation>
    <scope>NUCLEOTIDE SEQUENCE [LARGE SCALE GENOMIC DNA]</scope>
    <source>
        <strain>053442</strain>
    </source>
</reference>
<sequence>MLQRTLAKSISVTGVGLHSGERVALTLHPAPENSGISFRRTDLDGEMGEQIKLTPYLINDTRLSSTIVTDKGVRVGTIEHIMSALSAYGIDNALIELNAPEIPIMDGSSLPFIYLLQDAGVVDQKAQKRFLKILKPVEIKEAGKWVRFTPYDGFKVTLTIEFDHPVFNRSSPTFEIDFAGKSYIDEIARARTFGFMHEVEMMRAHNLGLGGNLNNAIVIDDTDVLNPEGLRYPDEFVRHKILDAIGDLYIVGHPIVGAFEGYKSGHAINNALLRAVLADETAYDRVEFADSDDLPDAFHELNIRTCG</sequence>
<accession>A9LZR8</accession>
<organism>
    <name type="scientific">Neisseria meningitidis serogroup C (strain 053442)</name>
    <dbReference type="NCBI Taxonomy" id="374833"/>
    <lineage>
        <taxon>Bacteria</taxon>
        <taxon>Pseudomonadati</taxon>
        <taxon>Pseudomonadota</taxon>
        <taxon>Betaproteobacteria</taxon>
        <taxon>Neisseriales</taxon>
        <taxon>Neisseriaceae</taxon>
        <taxon>Neisseria</taxon>
    </lineage>
</organism>
<evidence type="ECO:0000255" key="1">
    <source>
        <dbReference type="HAMAP-Rule" id="MF_00388"/>
    </source>
</evidence>
<keyword id="KW-0378">Hydrolase</keyword>
<keyword id="KW-0441">Lipid A biosynthesis</keyword>
<keyword id="KW-0444">Lipid biosynthesis</keyword>
<keyword id="KW-0443">Lipid metabolism</keyword>
<keyword id="KW-0479">Metal-binding</keyword>
<keyword id="KW-0862">Zinc</keyword>
<proteinExistence type="inferred from homology"/>
<gene>
    <name evidence="1" type="primary">lpxC</name>
    <name type="ordered locus">NMCC_0020</name>
</gene>